<name>ILVD_DEHMC</name>
<evidence type="ECO:0000255" key="1">
    <source>
        <dbReference type="HAMAP-Rule" id="MF_00012"/>
    </source>
</evidence>
<gene>
    <name evidence="1" type="primary">ilvD</name>
    <name type="ordered locus">cbdbA815</name>
</gene>
<sequence>MKSEDVKLGIERAPHRSLLRALGLNTESFQKPFIGIVNSFTEVVPGHIHLRQISEAVKEGINAAGGVGFEFNTIAVCDGIAMNHAGMKYSLPSREIIANTVEIMAMAHAFDGLVFIPNCDKVVPGMLMAACRLNIPSIFVSGGPMLAGRLRKNDQVSCVDLNSVFEAVGQVAKGQMTEEELLELEKVACPGCGSCAGMFTANTMNCLTEALGMALPGNGTIPAVDSRRTQLAKSAGQQIMQLIKDNICPKDIITPDAIHNAFSLDVALGGSTNSVLHVMAVAHEAGADFSLEQINRISDCTPNLCKLRPSGPYHIENLDQSGGIGSVLKELKPWLKNDARTVSGKTIGQLADAAPKADNKVIRFASNPYSPKGGLAVLFGNLAPNGSVVKRSAVAPEMMVHRGPARIFDSEELATKAIMGGKIKPGDVLVIRYEGPKGGPGMREMLTPTSLLAGMGLDKEVALITDGRFSGATRGAAMGHVSPEAAACGPIAALQDGDMINIDIHNYKLSVELSDEEIQKRLANVPVFEPKIKSGYLKFYTENVTSASTGAVFKD</sequence>
<feature type="chain" id="PRO_0000225388" description="Dihydroxy-acid dehydratase">
    <location>
        <begin position="1"/>
        <end position="555"/>
    </location>
</feature>
<feature type="active site" description="Proton acceptor" evidence="1">
    <location>
        <position position="470"/>
    </location>
</feature>
<feature type="binding site" evidence="1">
    <location>
        <position position="78"/>
    </location>
    <ligand>
        <name>Mg(2+)</name>
        <dbReference type="ChEBI" id="CHEBI:18420"/>
    </ligand>
</feature>
<feature type="binding site" evidence="1">
    <location>
        <position position="119"/>
    </location>
    <ligand>
        <name>[2Fe-2S] cluster</name>
        <dbReference type="ChEBI" id="CHEBI:190135"/>
    </ligand>
</feature>
<feature type="binding site" evidence="1">
    <location>
        <position position="120"/>
    </location>
    <ligand>
        <name>Mg(2+)</name>
        <dbReference type="ChEBI" id="CHEBI:18420"/>
    </ligand>
</feature>
<feature type="binding site" description="via carbamate group" evidence="1">
    <location>
        <position position="121"/>
    </location>
    <ligand>
        <name>Mg(2+)</name>
        <dbReference type="ChEBI" id="CHEBI:18420"/>
    </ligand>
</feature>
<feature type="binding site" evidence="1">
    <location>
        <position position="195"/>
    </location>
    <ligand>
        <name>[2Fe-2S] cluster</name>
        <dbReference type="ChEBI" id="CHEBI:190135"/>
    </ligand>
</feature>
<feature type="binding site" evidence="1">
    <location>
        <position position="444"/>
    </location>
    <ligand>
        <name>Mg(2+)</name>
        <dbReference type="ChEBI" id="CHEBI:18420"/>
    </ligand>
</feature>
<feature type="modified residue" description="N6-carboxylysine" evidence="1">
    <location>
        <position position="121"/>
    </location>
</feature>
<protein>
    <recommendedName>
        <fullName evidence="1">Dihydroxy-acid dehydratase</fullName>
        <shortName evidence="1">DAD</shortName>
        <ecNumber evidence="1">4.2.1.9</ecNumber>
    </recommendedName>
</protein>
<keyword id="KW-0001">2Fe-2S</keyword>
<keyword id="KW-0028">Amino-acid biosynthesis</keyword>
<keyword id="KW-0100">Branched-chain amino acid biosynthesis</keyword>
<keyword id="KW-0408">Iron</keyword>
<keyword id="KW-0411">Iron-sulfur</keyword>
<keyword id="KW-0456">Lyase</keyword>
<keyword id="KW-0460">Magnesium</keyword>
<keyword id="KW-0479">Metal-binding</keyword>
<comment type="function">
    <text evidence="1">Functions in the biosynthesis of branched-chain amino acids. Catalyzes the dehydration of (2R,3R)-2,3-dihydroxy-3-methylpentanoate (2,3-dihydroxy-3-methylvalerate) into 2-oxo-3-methylpentanoate (2-oxo-3-methylvalerate) and of (2R)-2,3-dihydroxy-3-methylbutanoate (2,3-dihydroxyisovalerate) into 2-oxo-3-methylbutanoate (2-oxoisovalerate), the penultimate precursor to L-isoleucine and L-valine, respectively.</text>
</comment>
<comment type="catalytic activity">
    <reaction evidence="1">
        <text>(2R)-2,3-dihydroxy-3-methylbutanoate = 3-methyl-2-oxobutanoate + H2O</text>
        <dbReference type="Rhea" id="RHEA:24809"/>
        <dbReference type="ChEBI" id="CHEBI:11851"/>
        <dbReference type="ChEBI" id="CHEBI:15377"/>
        <dbReference type="ChEBI" id="CHEBI:49072"/>
        <dbReference type="EC" id="4.2.1.9"/>
    </reaction>
    <physiologicalReaction direction="left-to-right" evidence="1">
        <dbReference type="Rhea" id="RHEA:24810"/>
    </physiologicalReaction>
</comment>
<comment type="catalytic activity">
    <reaction evidence="1">
        <text>(2R,3R)-2,3-dihydroxy-3-methylpentanoate = (S)-3-methyl-2-oxopentanoate + H2O</text>
        <dbReference type="Rhea" id="RHEA:27694"/>
        <dbReference type="ChEBI" id="CHEBI:15377"/>
        <dbReference type="ChEBI" id="CHEBI:35146"/>
        <dbReference type="ChEBI" id="CHEBI:49258"/>
        <dbReference type="EC" id="4.2.1.9"/>
    </reaction>
    <physiologicalReaction direction="left-to-right" evidence="1">
        <dbReference type="Rhea" id="RHEA:27695"/>
    </physiologicalReaction>
</comment>
<comment type="cofactor">
    <cofactor evidence="1">
        <name>[2Fe-2S] cluster</name>
        <dbReference type="ChEBI" id="CHEBI:190135"/>
    </cofactor>
    <text evidence="1">Binds 1 [2Fe-2S] cluster per subunit. This cluster acts as a Lewis acid cofactor.</text>
</comment>
<comment type="cofactor">
    <cofactor evidence="1">
        <name>Mg(2+)</name>
        <dbReference type="ChEBI" id="CHEBI:18420"/>
    </cofactor>
</comment>
<comment type="pathway">
    <text evidence="1">Amino-acid biosynthesis; L-isoleucine biosynthesis; L-isoleucine from 2-oxobutanoate: step 3/4.</text>
</comment>
<comment type="pathway">
    <text evidence="1">Amino-acid biosynthesis; L-valine biosynthesis; L-valine from pyruvate: step 3/4.</text>
</comment>
<comment type="subunit">
    <text evidence="1">Homodimer.</text>
</comment>
<comment type="similarity">
    <text evidence="1">Belongs to the IlvD/Edd family.</text>
</comment>
<proteinExistence type="inferred from homology"/>
<dbReference type="EC" id="4.2.1.9" evidence="1"/>
<dbReference type="EMBL" id="AJ965256">
    <property type="protein sequence ID" value="CAI82961.1"/>
    <property type="molecule type" value="Genomic_DNA"/>
</dbReference>
<dbReference type="RefSeq" id="WP_011309312.1">
    <property type="nucleotide sequence ID" value="NC_007356.1"/>
</dbReference>
<dbReference type="SMR" id="Q3ZXH9"/>
<dbReference type="KEGG" id="deh:cbdbA815"/>
<dbReference type="HOGENOM" id="CLU_014271_4_2_0"/>
<dbReference type="UniPathway" id="UPA00047">
    <property type="reaction ID" value="UER00057"/>
</dbReference>
<dbReference type="UniPathway" id="UPA00049">
    <property type="reaction ID" value="UER00061"/>
</dbReference>
<dbReference type="Proteomes" id="UP000000433">
    <property type="component" value="Chromosome"/>
</dbReference>
<dbReference type="GO" id="GO:0005829">
    <property type="term" value="C:cytosol"/>
    <property type="evidence" value="ECO:0007669"/>
    <property type="project" value="TreeGrafter"/>
</dbReference>
<dbReference type="GO" id="GO:0051537">
    <property type="term" value="F:2 iron, 2 sulfur cluster binding"/>
    <property type="evidence" value="ECO:0007669"/>
    <property type="project" value="UniProtKB-UniRule"/>
</dbReference>
<dbReference type="GO" id="GO:0004160">
    <property type="term" value="F:dihydroxy-acid dehydratase activity"/>
    <property type="evidence" value="ECO:0007669"/>
    <property type="project" value="UniProtKB-UniRule"/>
</dbReference>
<dbReference type="GO" id="GO:0000287">
    <property type="term" value="F:magnesium ion binding"/>
    <property type="evidence" value="ECO:0007669"/>
    <property type="project" value="UniProtKB-UniRule"/>
</dbReference>
<dbReference type="GO" id="GO:0009097">
    <property type="term" value="P:isoleucine biosynthetic process"/>
    <property type="evidence" value="ECO:0007669"/>
    <property type="project" value="UniProtKB-UniRule"/>
</dbReference>
<dbReference type="GO" id="GO:0009099">
    <property type="term" value="P:L-valine biosynthetic process"/>
    <property type="evidence" value="ECO:0007669"/>
    <property type="project" value="UniProtKB-UniRule"/>
</dbReference>
<dbReference type="FunFam" id="3.50.30.80:FF:000001">
    <property type="entry name" value="Dihydroxy-acid dehydratase"/>
    <property type="match status" value="1"/>
</dbReference>
<dbReference type="Gene3D" id="3.50.30.80">
    <property type="entry name" value="IlvD/EDD C-terminal domain-like"/>
    <property type="match status" value="1"/>
</dbReference>
<dbReference type="HAMAP" id="MF_00012">
    <property type="entry name" value="IlvD"/>
    <property type="match status" value="1"/>
</dbReference>
<dbReference type="InterPro" id="IPR042096">
    <property type="entry name" value="Dihydro-acid_dehy_C"/>
</dbReference>
<dbReference type="InterPro" id="IPR004404">
    <property type="entry name" value="DihydroxyA_deHydtase"/>
</dbReference>
<dbReference type="InterPro" id="IPR020558">
    <property type="entry name" value="DiOHA_6PGluconate_deHydtase_CS"/>
</dbReference>
<dbReference type="InterPro" id="IPR056740">
    <property type="entry name" value="ILV_EDD_C"/>
</dbReference>
<dbReference type="InterPro" id="IPR000581">
    <property type="entry name" value="ILV_EDD_N"/>
</dbReference>
<dbReference type="InterPro" id="IPR037237">
    <property type="entry name" value="IlvD/EDD_N"/>
</dbReference>
<dbReference type="NCBIfam" id="TIGR00110">
    <property type="entry name" value="ilvD"/>
    <property type="match status" value="1"/>
</dbReference>
<dbReference type="NCBIfam" id="NF002068">
    <property type="entry name" value="PRK00911.1"/>
    <property type="match status" value="1"/>
</dbReference>
<dbReference type="PANTHER" id="PTHR43661">
    <property type="entry name" value="D-XYLONATE DEHYDRATASE"/>
    <property type="match status" value="1"/>
</dbReference>
<dbReference type="PANTHER" id="PTHR43661:SF3">
    <property type="entry name" value="D-XYLONATE DEHYDRATASE YAGF-RELATED"/>
    <property type="match status" value="1"/>
</dbReference>
<dbReference type="Pfam" id="PF24877">
    <property type="entry name" value="ILV_EDD_C"/>
    <property type="match status" value="1"/>
</dbReference>
<dbReference type="Pfam" id="PF00920">
    <property type="entry name" value="ILVD_EDD_N"/>
    <property type="match status" value="1"/>
</dbReference>
<dbReference type="SUPFAM" id="SSF143975">
    <property type="entry name" value="IlvD/EDD N-terminal domain-like"/>
    <property type="match status" value="1"/>
</dbReference>
<dbReference type="SUPFAM" id="SSF52016">
    <property type="entry name" value="LeuD/IlvD-like"/>
    <property type="match status" value="1"/>
</dbReference>
<dbReference type="PROSITE" id="PS00886">
    <property type="entry name" value="ILVD_EDD_1"/>
    <property type="match status" value="1"/>
</dbReference>
<dbReference type="PROSITE" id="PS00887">
    <property type="entry name" value="ILVD_EDD_2"/>
    <property type="match status" value="1"/>
</dbReference>
<organism>
    <name type="scientific">Dehalococcoides mccartyi (strain CBDB1)</name>
    <dbReference type="NCBI Taxonomy" id="255470"/>
    <lineage>
        <taxon>Bacteria</taxon>
        <taxon>Bacillati</taxon>
        <taxon>Chloroflexota</taxon>
        <taxon>Dehalococcoidia</taxon>
        <taxon>Dehalococcoidales</taxon>
        <taxon>Dehalococcoidaceae</taxon>
        <taxon>Dehalococcoides</taxon>
    </lineage>
</organism>
<accession>Q3ZXH9</accession>
<reference key="1">
    <citation type="journal article" date="2005" name="Nat. Biotechnol.">
        <title>Genome sequence of the chlorinated compound-respiring bacterium Dehalococcoides species strain CBDB1.</title>
        <authorList>
            <person name="Kube M."/>
            <person name="Beck A."/>
            <person name="Zinder S.H."/>
            <person name="Kuhl H."/>
            <person name="Reinhardt R."/>
            <person name="Adrian L."/>
        </authorList>
    </citation>
    <scope>NUCLEOTIDE SEQUENCE [LARGE SCALE GENOMIC DNA]</scope>
    <source>
        <strain>CBDB1</strain>
    </source>
</reference>